<protein>
    <recommendedName>
        <fullName>Probable splicing factor YJU2B</fullName>
    </recommendedName>
    <alternativeName>
        <fullName>Coiled-coil domain-containing protein 130</fullName>
    </alternativeName>
</protein>
<comment type="function">
    <text evidence="1">May be involved in mRNA splicing.</text>
</comment>
<comment type="subcellular location">
    <subcellularLocation>
        <location evidence="1">Nucleus</location>
    </subcellularLocation>
</comment>
<comment type="similarity">
    <text evidence="3">Belongs to the CWC16 family.</text>
</comment>
<comment type="sequence caution" evidence="3">
    <conflict type="frameshift">
        <sequence resource="EMBL-CDS" id="AAQ91250"/>
    </conflict>
</comment>
<sequence>MGERKGVNKWYPPDFDPAKHGSINGYYKTHPLRERARKLSQGILIIRFEMPYNIWCDGCKNHIGMGVRYNAEKKKVGNYYTTPIYRFRMKCHLCVNYIEMQTDPATCDYVIVSGAQRKEERWDMAENEQILTTERNEKEKLETDAMYKLDHGGKDKEKLRAAIPSLNELQEHQSGWKDDFQLNSALRRKFRTEKKVIAEEEEKDNAVRLRTGLSIPLVPEREEDKKLASLLTFQSPDSYEDKKQWKRQEISSRSWFNSPSSAAGGAAGSLLQKLGQQGRGAAVAKALSSSTSTLPILVRRKSESSKSETNNTMSTILPVDTHPAAKDTDATDLPSIVNNINVSINTDINSCTTDACKASSSSEEENSIDSCATGKSLVADYSDSDSGSEV</sequence>
<accession>Q66I85</accession>
<accession>Q6TNS9</accession>
<proteinExistence type="evidence at transcript level"/>
<name>YJU2B_DANRE</name>
<dbReference type="EMBL" id="AY391438">
    <property type="protein sequence ID" value="AAQ91250.1"/>
    <property type="status" value="ALT_FRAME"/>
    <property type="molecule type" value="mRNA"/>
</dbReference>
<dbReference type="EMBL" id="BC081482">
    <property type="protein sequence ID" value="AAH81482.1"/>
    <property type="molecule type" value="mRNA"/>
</dbReference>
<dbReference type="RefSeq" id="NP_991158.2">
    <property type="nucleotide sequence ID" value="NM_205595.2"/>
</dbReference>
<dbReference type="SMR" id="Q66I85"/>
<dbReference type="FunCoup" id="Q66I85">
    <property type="interactions" value="2090"/>
</dbReference>
<dbReference type="STRING" id="7955.ENSDARP00000060887"/>
<dbReference type="PaxDb" id="7955-ENSDARP00000060887"/>
<dbReference type="Ensembl" id="ENSDART00000060888">
    <property type="protein sequence ID" value="ENSDARP00000060887"/>
    <property type="gene ID" value="ENSDARG00000041533"/>
</dbReference>
<dbReference type="Ensembl" id="ENSDART00000169397">
    <property type="protein sequence ID" value="ENSDARP00000134561"/>
    <property type="gene ID" value="ENSDARG00000041533"/>
</dbReference>
<dbReference type="GeneID" id="402887"/>
<dbReference type="KEGG" id="dre:402887"/>
<dbReference type="AGR" id="ZFIN:ZDB-GENE-040912-36"/>
<dbReference type="CTD" id="81576"/>
<dbReference type="ZFIN" id="ZDB-GENE-040912-36">
    <property type="gene designation" value="yju2b"/>
</dbReference>
<dbReference type="eggNOG" id="KOG2990">
    <property type="taxonomic scope" value="Eukaryota"/>
</dbReference>
<dbReference type="HOGENOM" id="CLU_050402_3_1_1"/>
<dbReference type="InParanoid" id="Q66I85"/>
<dbReference type="OMA" id="RNMSVWD"/>
<dbReference type="OrthoDB" id="360327at2759"/>
<dbReference type="PhylomeDB" id="Q66I85"/>
<dbReference type="TreeFam" id="TF313671"/>
<dbReference type="PRO" id="PR:Q66I85"/>
<dbReference type="Proteomes" id="UP000000437">
    <property type="component" value="Alternate scaffold 22"/>
</dbReference>
<dbReference type="Proteomes" id="UP000000437">
    <property type="component" value="Chromosome 22"/>
</dbReference>
<dbReference type="Bgee" id="ENSDARG00000041533">
    <property type="expression patterns" value="Expressed in tail and 22 other cell types or tissues"/>
</dbReference>
<dbReference type="ExpressionAtlas" id="Q66I85">
    <property type="expression patterns" value="baseline"/>
</dbReference>
<dbReference type="GO" id="GO:0071014">
    <property type="term" value="C:post-mRNA release spliceosomal complex"/>
    <property type="evidence" value="ECO:0000318"/>
    <property type="project" value="GO_Central"/>
</dbReference>
<dbReference type="GO" id="GO:0005684">
    <property type="term" value="C:U2-type spliceosomal complex"/>
    <property type="evidence" value="ECO:0000318"/>
    <property type="project" value="GO_Central"/>
</dbReference>
<dbReference type="GO" id="GO:0000398">
    <property type="term" value="P:mRNA splicing, via spliceosome"/>
    <property type="evidence" value="ECO:0007669"/>
    <property type="project" value="InterPro"/>
</dbReference>
<dbReference type="GO" id="GO:0008380">
    <property type="term" value="P:RNA splicing"/>
    <property type="evidence" value="ECO:0000318"/>
    <property type="project" value="GO_Central"/>
</dbReference>
<dbReference type="InterPro" id="IPR007590">
    <property type="entry name" value="Saf4/Yju2"/>
</dbReference>
<dbReference type="PANTHER" id="PTHR12111">
    <property type="entry name" value="SPLICING FACTOR YJU2"/>
    <property type="match status" value="1"/>
</dbReference>
<dbReference type="PANTHER" id="PTHR12111:SF2">
    <property type="entry name" value="SPLICING FACTOR YJU2B-RELATED"/>
    <property type="match status" value="1"/>
</dbReference>
<dbReference type="Pfam" id="PF04502">
    <property type="entry name" value="Saf4_Yju2"/>
    <property type="match status" value="1"/>
</dbReference>
<organism>
    <name type="scientific">Danio rerio</name>
    <name type="common">Zebrafish</name>
    <name type="synonym">Brachydanio rerio</name>
    <dbReference type="NCBI Taxonomy" id="7955"/>
    <lineage>
        <taxon>Eukaryota</taxon>
        <taxon>Metazoa</taxon>
        <taxon>Chordata</taxon>
        <taxon>Craniata</taxon>
        <taxon>Vertebrata</taxon>
        <taxon>Euteleostomi</taxon>
        <taxon>Actinopterygii</taxon>
        <taxon>Neopterygii</taxon>
        <taxon>Teleostei</taxon>
        <taxon>Ostariophysi</taxon>
        <taxon>Cypriniformes</taxon>
        <taxon>Danionidae</taxon>
        <taxon>Danioninae</taxon>
        <taxon>Danio</taxon>
    </lineage>
</organism>
<reference key="1">
    <citation type="journal article" date="2004" name="Proc. Natl. Acad. Sci. U.S.A.">
        <title>Hematopoietic gene expression profile in zebrafish kidney marrow.</title>
        <authorList>
            <person name="Song H.-D."/>
            <person name="Sun X.-J."/>
            <person name="Deng M."/>
            <person name="Zhang G.-W."/>
            <person name="Zhou Y."/>
            <person name="Wu X.-Y."/>
            <person name="Sheng Y."/>
            <person name="Chen Y."/>
            <person name="Ruan Z."/>
            <person name="Jiang C.-L."/>
            <person name="Fan H.-Y."/>
            <person name="Zon L.I."/>
            <person name="Kanki J.P."/>
            <person name="Liu T.X."/>
            <person name="Look A.T."/>
            <person name="Chen Z."/>
        </authorList>
    </citation>
    <scope>NUCLEOTIDE SEQUENCE [LARGE SCALE MRNA]</scope>
    <source>
        <tissue>Kidney marrow</tissue>
    </source>
</reference>
<reference key="2">
    <citation type="submission" date="2004-09" db="EMBL/GenBank/DDBJ databases">
        <authorList>
            <consortium name="NIH - Zebrafish Gene Collection (ZGC) project"/>
        </authorList>
    </citation>
    <scope>NUCLEOTIDE SEQUENCE [LARGE SCALE MRNA]</scope>
    <source>
        <tissue>Ovary</tissue>
    </source>
</reference>
<feature type="chain" id="PRO_0000280740" description="Probable splicing factor YJU2B">
    <location>
        <begin position="1"/>
        <end position="390"/>
    </location>
</feature>
<feature type="region of interest" description="Disordered" evidence="2">
    <location>
        <begin position="354"/>
        <end position="390"/>
    </location>
</feature>
<feature type="sequence conflict" description="In Ref. 1; AAQ91250." evidence="3" ref="1">
    <original>V</original>
    <variation>L</variation>
    <location>
        <position position="196"/>
    </location>
</feature>
<feature type="sequence conflict" description="In Ref. 1; AAQ91250." evidence="3" ref="1">
    <original>Q</original>
    <variation>L</variation>
    <location>
        <position position="244"/>
    </location>
</feature>
<feature type="sequence conflict" description="In Ref. 1; AAQ91250." evidence="3" ref="1">
    <original>T</original>
    <variation>A</variation>
    <location>
        <position position="373"/>
    </location>
</feature>
<keyword id="KW-0539">Nucleus</keyword>
<keyword id="KW-1185">Reference proteome</keyword>
<gene>
    <name type="primary">yju2b</name>
    <name type="synonym">ccdc130</name>
    <name type="ORF">zgc:103496</name>
</gene>
<evidence type="ECO:0000250" key="1">
    <source>
        <dbReference type="UniProtKB" id="Q9BW85"/>
    </source>
</evidence>
<evidence type="ECO:0000256" key="2">
    <source>
        <dbReference type="SAM" id="MobiDB-lite"/>
    </source>
</evidence>
<evidence type="ECO:0000305" key="3"/>